<organism>
    <name type="scientific">Flaveria bidentis</name>
    <name type="common">Coastal plain yellowtops</name>
    <name type="synonym">Ethulia bidentis</name>
    <dbReference type="NCBI Taxonomy" id="4224"/>
    <lineage>
        <taxon>Eukaryota</taxon>
        <taxon>Viridiplantae</taxon>
        <taxon>Streptophyta</taxon>
        <taxon>Embryophyta</taxon>
        <taxon>Tracheophyta</taxon>
        <taxon>Spermatophyta</taxon>
        <taxon>Magnoliopsida</taxon>
        <taxon>eudicotyledons</taxon>
        <taxon>Gunneridae</taxon>
        <taxon>Pentapetalae</taxon>
        <taxon>asterids</taxon>
        <taxon>campanulids</taxon>
        <taxon>Asterales</taxon>
        <taxon>Asteraceae</taxon>
        <taxon>Asteroideae</taxon>
        <taxon>Heliantheae alliance</taxon>
        <taxon>Tageteae</taxon>
        <taxon>Flaveria</taxon>
    </lineage>
</organism>
<feature type="chain" id="PRO_0000137137" description="Nucleoside diphosphate kinase B">
    <location>
        <begin position="1"/>
        <end position="148"/>
    </location>
</feature>
<feature type="active site" description="Pros-phosphohistidine intermediate" evidence="1">
    <location>
        <position position="115"/>
    </location>
</feature>
<feature type="binding site" evidence="1">
    <location>
        <position position="9"/>
    </location>
    <ligand>
        <name>ATP</name>
        <dbReference type="ChEBI" id="CHEBI:30616"/>
    </ligand>
</feature>
<feature type="binding site" evidence="1">
    <location>
        <position position="57"/>
    </location>
    <ligand>
        <name>ATP</name>
        <dbReference type="ChEBI" id="CHEBI:30616"/>
    </ligand>
</feature>
<feature type="binding site" evidence="1">
    <location>
        <position position="85"/>
    </location>
    <ligand>
        <name>ATP</name>
        <dbReference type="ChEBI" id="CHEBI:30616"/>
    </ligand>
</feature>
<feature type="binding site" evidence="1">
    <location>
        <position position="91"/>
    </location>
    <ligand>
        <name>ATP</name>
        <dbReference type="ChEBI" id="CHEBI:30616"/>
    </ligand>
</feature>
<feature type="binding site" evidence="1">
    <location>
        <position position="102"/>
    </location>
    <ligand>
        <name>ATP</name>
        <dbReference type="ChEBI" id="CHEBI:30616"/>
    </ligand>
</feature>
<feature type="binding site" evidence="1">
    <location>
        <position position="112"/>
    </location>
    <ligand>
        <name>ATP</name>
        <dbReference type="ChEBI" id="CHEBI:30616"/>
    </ligand>
</feature>
<proteinExistence type="evidence at transcript level"/>
<accession>P47920</accession>
<name>NDKB_FLABI</name>
<protein>
    <recommendedName>
        <fullName>Nucleoside diphosphate kinase B</fullName>
        <shortName>NDK B</shortName>
        <shortName>NDP kinase B</shortName>
        <ecNumber>2.7.4.6</ecNumber>
    </recommendedName>
</protein>
<reference key="1">
    <citation type="journal article" date="1996" name="Genome">
        <title>Molecular and biochemical characterization of two nucleoside diphosphate kinase cDNA clones from Flaveria bidentis.</title>
        <authorList>
            <person name="Ananvoranich S."/>
            <person name="Grandmaison J."/>
            <person name="Gulick P.J."/>
        </authorList>
    </citation>
    <scope>NUCLEOTIDE SEQUENCE [MRNA]</scope>
    <source>
        <tissue>Leaf</tissue>
    </source>
</reference>
<evidence type="ECO:0000250" key="1"/>
<evidence type="ECO:0000305" key="2"/>
<dbReference type="EC" id="2.7.4.6"/>
<dbReference type="EMBL" id="U10283">
    <property type="protein sequence ID" value="AAA19005.1"/>
    <property type="molecule type" value="mRNA"/>
</dbReference>
<dbReference type="SMR" id="P47920"/>
<dbReference type="GO" id="GO:0005524">
    <property type="term" value="F:ATP binding"/>
    <property type="evidence" value="ECO:0007669"/>
    <property type="project" value="UniProtKB-KW"/>
</dbReference>
<dbReference type="GO" id="GO:0046872">
    <property type="term" value="F:metal ion binding"/>
    <property type="evidence" value="ECO:0007669"/>
    <property type="project" value="UniProtKB-KW"/>
</dbReference>
<dbReference type="GO" id="GO:0004550">
    <property type="term" value="F:nucleoside diphosphate kinase activity"/>
    <property type="evidence" value="ECO:0007669"/>
    <property type="project" value="UniProtKB-EC"/>
</dbReference>
<dbReference type="GO" id="GO:0006241">
    <property type="term" value="P:CTP biosynthetic process"/>
    <property type="evidence" value="ECO:0007669"/>
    <property type="project" value="InterPro"/>
</dbReference>
<dbReference type="GO" id="GO:0006183">
    <property type="term" value="P:GTP biosynthetic process"/>
    <property type="evidence" value="ECO:0007669"/>
    <property type="project" value="InterPro"/>
</dbReference>
<dbReference type="GO" id="GO:0006228">
    <property type="term" value="P:UTP biosynthetic process"/>
    <property type="evidence" value="ECO:0007669"/>
    <property type="project" value="InterPro"/>
</dbReference>
<dbReference type="CDD" id="cd04413">
    <property type="entry name" value="NDPk_I"/>
    <property type="match status" value="1"/>
</dbReference>
<dbReference type="FunFam" id="3.30.70.141:FF:000002">
    <property type="entry name" value="Nucleoside diphosphate kinase"/>
    <property type="match status" value="1"/>
</dbReference>
<dbReference type="Gene3D" id="3.30.70.141">
    <property type="entry name" value="Nucleoside diphosphate kinase-like domain"/>
    <property type="match status" value="1"/>
</dbReference>
<dbReference type="HAMAP" id="MF_00451">
    <property type="entry name" value="NDP_kinase"/>
    <property type="match status" value="1"/>
</dbReference>
<dbReference type="InterPro" id="IPR034907">
    <property type="entry name" value="NDK-like_dom"/>
</dbReference>
<dbReference type="InterPro" id="IPR036850">
    <property type="entry name" value="NDK-like_dom_sf"/>
</dbReference>
<dbReference type="InterPro" id="IPR001564">
    <property type="entry name" value="Nucleoside_diP_kinase"/>
</dbReference>
<dbReference type="InterPro" id="IPR023005">
    <property type="entry name" value="Nucleoside_diP_kinase_AS"/>
</dbReference>
<dbReference type="NCBIfam" id="NF001908">
    <property type="entry name" value="PRK00668.1"/>
    <property type="match status" value="1"/>
</dbReference>
<dbReference type="PANTHER" id="PTHR11349">
    <property type="entry name" value="NUCLEOSIDE DIPHOSPHATE KINASE"/>
    <property type="match status" value="1"/>
</dbReference>
<dbReference type="Pfam" id="PF00334">
    <property type="entry name" value="NDK"/>
    <property type="match status" value="1"/>
</dbReference>
<dbReference type="PRINTS" id="PR01243">
    <property type="entry name" value="NUCDPKINASE"/>
</dbReference>
<dbReference type="SMART" id="SM00562">
    <property type="entry name" value="NDK"/>
    <property type="match status" value="1"/>
</dbReference>
<dbReference type="SUPFAM" id="SSF54919">
    <property type="entry name" value="Nucleoside diphosphate kinase, NDK"/>
    <property type="match status" value="1"/>
</dbReference>
<dbReference type="PROSITE" id="PS00469">
    <property type="entry name" value="NDPK"/>
    <property type="match status" value="1"/>
</dbReference>
<dbReference type="PROSITE" id="PS51374">
    <property type="entry name" value="NDPK_LIKE"/>
    <property type="match status" value="1"/>
</dbReference>
<sequence>MEHTFIMIKPDGVQRGLVGEIIGRFEKKGFSLKGLKLLTVDQAFAEKHYADLSAKPFFNGLVEYIISGPVVAMVWEGKNVVTTGRKIIGATNPAESAPGTIRGDFAIDIGRNVIHGSDAVESAKKEIALWFPEGVANWSSSLHPWIYE</sequence>
<comment type="function">
    <text>Major role in the synthesis of nucleoside triphosphates other than ATP. The ATP gamma phosphate is transferred to the NDP beta phosphate via a ping-pong mechanism, using a phosphorylated active-site intermediate.</text>
</comment>
<comment type="catalytic activity">
    <reaction>
        <text>a 2'-deoxyribonucleoside 5'-diphosphate + ATP = a 2'-deoxyribonucleoside 5'-triphosphate + ADP</text>
        <dbReference type="Rhea" id="RHEA:44640"/>
        <dbReference type="ChEBI" id="CHEBI:30616"/>
        <dbReference type="ChEBI" id="CHEBI:61560"/>
        <dbReference type="ChEBI" id="CHEBI:73316"/>
        <dbReference type="ChEBI" id="CHEBI:456216"/>
        <dbReference type="EC" id="2.7.4.6"/>
    </reaction>
</comment>
<comment type="catalytic activity">
    <reaction>
        <text>a ribonucleoside 5'-diphosphate + ATP = a ribonucleoside 5'-triphosphate + ADP</text>
        <dbReference type="Rhea" id="RHEA:18113"/>
        <dbReference type="ChEBI" id="CHEBI:30616"/>
        <dbReference type="ChEBI" id="CHEBI:57930"/>
        <dbReference type="ChEBI" id="CHEBI:61557"/>
        <dbReference type="ChEBI" id="CHEBI:456216"/>
        <dbReference type="EC" id="2.7.4.6"/>
    </reaction>
</comment>
<comment type="cofactor">
    <cofactor evidence="1">
        <name>Mg(2+)</name>
        <dbReference type="ChEBI" id="CHEBI:18420"/>
    </cofactor>
</comment>
<comment type="similarity">
    <text evidence="2">Belongs to the NDK family.</text>
</comment>
<keyword id="KW-0067">ATP-binding</keyword>
<keyword id="KW-0418">Kinase</keyword>
<keyword id="KW-0460">Magnesium</keyword>
<keyword id="KW-0479">Metal-binding</keyword>
<keyword id="KW-0546">Nucleotide metabolism</keyword>
<keyword id="KW-0547">Nucleotide-binding</keyword>
<keyword id="KW-0597">Phosphoprotein</keyword>
<keyword id="KW-0808">Transferase</keyword>